<keyword id="KW-0068">Autocatalytic cleavage</keyword>
<keyword id="KW-0210">Decarboxylase</keyword>
<keyword id="KW-0456">Lyase</keyword>
<keyword id="KW-0620">Polyamine biosynthesis</keyword>
<keyword id="KW-0670">Pyruvate</keyword>
<keyword id="KW-0704">Schiff base</keyword>
<keyword id="KW-0865">Zymogen</keyword>
<proteinExistence type="inferred from homology"/>
<evidence type="ECO:0000255" key="1">
    <source>
        <dbReference type="HAMAP-Rule" id="MF_01298"/>
    </source>
</evidence>
<name>ARGDC_SACI3</name>
<comment type="function">
    <text evidence="1">Specifically catalyzes the decarboxylation of L-arginine to agmatine. Has no S-adenosylmethionine decarboxylase (AdoMetDC) activity.</text>
</comment>
<comment type="catalytic activity">
    <reaction evidence="1">
        <text>L-arginine + H(+) = agmatine + CO2</text>
        <dbReference type="Rhea" id="RHEA:17641"/>
        <dbReference type="ChEBI" id="CHEBI:15378"/>
        <dbReference type="ChEBI" id="CHEBI:16526"/>
        <dbReference type="ChEBI" id="CHEBI:32682"/>
        <dbReference type="ChEBI" id="CHEBI:58145"/>
        <dbReference type="EC" id="4.1.1.19"/>
    </reaction>
</comment>
<comment type="cofactor">
    <cofactor evidence="1">
        <name>pyruvate</name>
        <dbReference type="ChEBI" id="CHEBI:15361"/>
    </cofactor>
    <text evidence="1">Binds 1 pyruvoyl group covalently per subunit.</text>
</comment>
<comment type="pathway">
    <text evidence="1">Amine and polyamine biosynthesis; agmatine biosynthesis; agmatine from L-arginine: step 1/1.</text>
</comment>
<comment type="subunit">
    <text evidence="1">Heterooctamer of four alpha and four beta chains arranged as a tetramer of alpha/beta heterodimers.</text>
</comment>
<comment type="PTM">
    <text evidence="1">Is synthesized initially as an inactive proenzyme. Formation of the active enzyme involves a self-maturation process in which the active site pyruvoyl group is generated from an internal serine residue via an autocatalytic post-translational modification. Two non-identical subunits are generated from the proenzyme in this reaction, and the pyruvate is formed at the N-terminus of the alpha chain, which is derived from the carboxyl end of the proenzyme. The post-translation cleavage follows an unusual pathway, termed non-hydrolytic serinolysis, in which the side chain hydroxyl group of the serine supplies its oxygen atom to form the C-terminus of the beta chain, while the remainder of the serine residue undergoes an oxidative deamination to produce ammonia and the pyruvoyl group blocking the N-terminus of the alpha chain.</text>
</comment>
<comment type="similarity">
    <text evidence="1">Belongs to the prokaryotic AdoMetDC family. Type 1 subfamily.</text>
</comment>
<organism>
    <name type="scientific">Saccharolobus islandicus (strain M.16.27)</name>
    <name type="common">Sulfolobus islandicus</name>
    <dbReference type="NCBI Taxonomy" id="427318"/>
    <lineage>
        <taxon>Archaea</taxon>
        <taxon>Thermoproteota</taxon>
        <taxon>Thermoprotei</taxon>
        <taxon>Sulfolobales</taxon>
        <taxon>Sulfolobaceae</taxon>
        <taxon>Saccharolobus</taxon>
    </lineage>
</organism>
<gene>
    <name type="ordered locus">M1627_1704</name>
</gene>
<dbReference type="EC" id="4.1.1.19" evidence="1"/>
<dbReference type="EMBL" id="CP001401">
    <property type="protein sequence ID" value="ACP55582.1"/>
    <property type="molecule type" value="Genomic_DNA"/>
</dbReference>
<dbReference type="SMR" id="C3N6F7"/>
<dbReference type="KEGG" id="sim:M1627_1704"/>
<dbReference type="HOGENOM" id="CLU_125470_2_1_2"/>
<dbReference type="UniPathway" id="UPA00186">
    <property type="reaction ID" value="UER00284"/>
</dbReference>
<dbReference type="Proteomes" id="UP000002307">
    <property type="component" value="Chromosome"/>
</dbReference>
<dbReference type="GO" id="GO:0005829">
    <property type="term" value="C:cytosol"/>
    <property type="evidence" value="ECO:0007669"/>
    <property type="project" value="TreeGrafter"/>
</dbReference>
<dbReference type="GO" id="GO:0008792">
    <property type="term" value="F:arginine decarboxylase activity"/>
    <property type="evidence" value="ECO:0007669"/>
    <property type="project" value="UniProtKB-UniRule"/>
</dbReference>
<dbReference type="GO" id="GO:0006527">
    <property type="term" value="P:arginine catabolic process"/>
    <property type="evidence" value="ECO:0007669"/>
    <property type="project" value="UniProtKB-UniRule"/>
</dbReference>
<dbReference type="GO" id="GO:0006596">
    <property type="term" value="P:polyamine biosynthetic process"/>
    <property type="evidence" value="ECO:0007669"/>
    <property type="project" value="UniProtKB-UniRule"/>
</dbReference>
<dbReference type="FunFam" id="3.60.90.10:FF:000005">
    <property type="entry name" value="Arginine decarboxylase proenzyme"/>
    <property type="match status" value="1"/>
</dbReference>
<dbReference type="Gene3D" id="3.60.90.10">
    <property type="entry name" value="S-adenosylmethionine decarboxylase"/>
    <property type="match status" value="1"/>
</dbReference>
<dbReference type="HAMAP" id="MF_00464">
    <property type="entry name" value="AdoMetDC_1"/>
    <property type="match status" value="1"/>
</dbReference>
<dbReference type="HAMAP" id="MF_01298">
    <property type="entry name" value="ArgDC"/>
    <property type="match status" value="1"/>
</dbReference>
<dbReference type="InterPro" id="IPR003826">
    <property type="entry name" value="AdoMetDC_fam_prok"/>
</dbReference>
<dbReference type="InterPro" id="IPR027549">
    <property type="entry name" value="ArgDC"/>
</dbReference>
<dbReference type="InterPro" id="IPR016067">
    <property type="entry name" value="S-AdoMet_deCO2ase_core"/>
</dbReference>
<dbReference type="InterPro" id="IPR017716">
    <property type="entry name" value="S-AdoMet_deCOase_pro-enz"/>
</dbReference>
<dbReference type="NCBIfam" id="TIGR03330">
    <property type="entry name" value="SAM_DCase_Bsu"/>
    <property type="match status" value="1"/>
</dbReference>
<dbReference type="PANTHER" id="PTHR33866">
    <property type="entry name" value="S-ADENOSYLMETHIONINE DECARBOXYLASE PROENZYME"/>
    <property type="match status" value="1"/>
</dbReference>
<dbReference type="PANTHER" id="PTHR33866:SF2">
    <property type="entry name" value="S-ADENOSYLMETHIONINE DECARBOXYLASE PROENZYME"/>
    <property type="match status" value="1"/>
</dbReference>
<dbReference type="Pfam" id="PF02675">
    <property type="entry name" value="AdoMet_dc"/>
    <property type="match status" value="1"/>
</dbReference>
<dbReference type="SUPFAM" id="SSF56276">
    <property type="entry name" value="S-adenosylmethionine decarboxylase"/>
    <property type="match status" value="1"/>
</dbReference>
<feature type="chain" id="PRO_1000214225" description="Arginine decarboxylase beta chain" evidence="1">
    <location>
        <begin position="1"/>
        <end position="81"/>
    </location>
</feature>
<feature type="chain" id="PRO_1000214226" description="Arginine decarboxylase alpha chain" evidence="1">
    <location>
        <begin position="82"/>
        <end position="134"/>
    </location>
</feature>
<feature type="active site" description="Schiff-base intermediate with substrate; via pyruvic acid" evidence="1">
    <location>
        <position position="82"/>
    </location>
</feature>
<feature type="active site" description="Proton acceptor; for processing activity" evidence="1">
    <location>
        <position position="87"/>
    </location>
</feature>
<feature type="active site" description="Proton donor; for catalytic activity" evidence="1">
    <location>
        <position position="102"/>
    </location>
</feature>
<feature type="site" description="Cleavage (non-hydrolytic); by autolysis" evidence="1">
    <location>
        <begin position="81"/>
        <end position="82"/>
    </location>
</feature>
<feature type="modified residue" description="Pyruvic acid (Ser); by autocatalysis" evidence="1">
    <location>
        <position position="82"/>
    </location>
</feature>
<reference key="1">
    <citation type="journal article" date="2009" name="Proc. Natl. Acad. Sci. U.S.A.">
        <title>Biogeography of the Sulfolobus islandicus pan-genome.</title>
        <authorList>
            <person name="Reno M.L."/>
            <person name="Held N.L."/>
            <person name="Fields C.J."/>
            <person name="Burke P.V."/>
            <person name="Whitaker R.J."/>
        </authorList>
    </citation>
    <scope>NUCLEOTIDE SEQUENCE [LARGE SCALE GENOMIC DNA]</scope>
    <source>
        <strain>M.16.27</strain>
    </source>
</reference>
<accession>C3N6F7</accession>
<sequence>MSEQEVLQKNNSPEGKEDRIIGKHVFGNLYDIDAERLNDKEFLEKLVLEAVNIAHMKLVEIKAWSFGGKKGGVSVIALVEESHIALHTWNEYNYATLDVYTCGEDSDPQSAFAHIVNALNPKRYQMFYADRSSQ</sequence>
<protein>
    <recommendedName>
        <fullName evidence="1">Arginine decarboxylase proenzyme</fullName>
        <shortName evidence="1">ADC</shortName>
        <shortName evidence="1">ArgDC</shortName>
        <ecNumber evidence="1">4.1.1.19</ecNumber>
    </recommendedName>
    <alternativeName>
        <fullName evidence="1">Pyruvoyl-dependent arginine decarboxylase</fullName>
    </alternativeName>
    <component>
        <recommendedName>
            <fullName evidence="1">Arginine decarboxylase beta chain</fullName>
        </recommendedName>
    </component>
    <component>
        <recommendedName>
            <fullName evidence="1">Arginine decarboxylase alpha chain</fullName>
        </recommendedName>
    </component>
</protein>